<dbReference type="EC" id="2.1.1.177" evidence="1"/>
<dbReference type="EMBL" id="AE017332">
    <property type="protein sequence ID" value="AAV27347.1"/>
    <property type="molecule type" value="Genomic_DNA"/>
</dbReference>
<dbReference type="RefSeq" id="WP_011205843.1">
    <property type="nucleotide sequence ID" value="NC_006360.1"/>
</dbReference>
<dbReference type="SMR" id="Q602E6"/>
<dbReference type="GeneID" id="41334291"/>
<dbReference type="KEGG" id="mhy:mhp004"/>
<dbReference type="eggNOG" id="COG1576">
    <property type="taxonomic scope" value="Bacteria"/>
</dbReference>
<dbReference type="HOGENOM" id="CLU_100552_2_0_14"/>
<dbReference type="PhylomeDB" id="Q602E6"/>
<dbReference type="Proteomes" id="UP000006822">
    <property type="component" value="Chromosome"/>
</dbReference>
<dbReference type="GO" id="GO:0005737">
    <property type="term" value="C:cytoplasm"/>
    <property type="evidence" value="ECO:0007669"/>
    <property type="project" value="UniProtKB-SubCell"/>
</dbReference>
<dbReference type="GO" id="GO:0070038">
    <property type="term" value="F:rRNA (pseudouridine-N3-)-methyltransferase activity"/>
    <property type="evidence" value="ECO:0007669"/>
    <property type="project" value="UniProtKB-UniRule"/>
</dbReference>
<dbReference type="CDD" id="cd18081">
    <property type="entry name" value="RlmH-like"/>
    <property type="match status" value="1"/>
</dbReference>
<dbReference type="Gene3D" id="3.40.1280.10">
    <property type="match status" value="1"/>
</dbReference>
<dbReference type="HAMAP" id="MF_00658">
    <property type="entry name" value="23SrRNA_methyltr_H"/>
    <property type="match status" value="1"/>
</dbReference>
<dbReference type="InterPro" id="IPR029028">
    <property type="entry name" value="Alpha/beta_knot_MTases"/>
</dbReference>
<dbReference type="InterPro" id="IPR003742">
    <property type="entry name" value="RlmH-like"/>
</dbReference>
<dbReference type="InterPro" id="IPR029026">
    <property type="entry name" value="tRNA_m1G_MTases_N"/>
</dbReference>
<dbReference type="PANTHER" id="PTHR33603">
    <property type="entry name" value="METHYLTRANSFERASE"/>
    <property type="match status" value="1"/>
</dbReference>
<dbReference type="PANTHER" id="PTHR33603:SF1">
    <property type="entry name" value="RIBOSOMAL RNA LARGE SUBUNIT METHYLTRANSFERASE H"/>
    <property type="match status" value="1"/>
</dbReference>
<dbReference type="Pfam" id="PF02590">
    <property type="entry name" value="SPOUT_MTase"/>
    <property type="match status" value="1"/>
</dbReference>
<dbReference type="PIRSF" id="PIRSF004505">
    <property type="entry name" value="MT_bac"/>
    <property type="match status" value="1"/>
</dbReference>
<dbReference type="SUPFAM" id="SSF75217">
    <property type="entry name" value="alpha/beta knot"/>
    <property type="match status" value="1"/>
</dbReference>
<keyword id="KW-0963">Cytoplasm</keyword>
<keyword id="KW-0489">Methyltransferase</keyword>
<keyword id="KW-0698">rRNA processing</keyword>
<keyword id="KW-0949">S-adenosyl-L-methionine</keyword>
<keyword id="KW-0808">Transferase</keyword>
<name>RLMH_MESH2</name>
<organism>
    <name type="scientific">Mesomycoplasma hyopneumoniae (strain 232)</name>
    <name type="common">Mycoplasma hyopneumoniae</name>
    <dbReference type="NCBI Taxonomy" id="295358"/>
    <lineage>
        <taxon>Bacteria</taxon>
        <taxon>Bacillati</taxon>
        <taxon>Mycoplasmatota</taxon>
        <taxon>Mycoplasmoidales</taxon>
        <taxon>Metamycoplasmataceae</taxon>
        <taxon>Mesomycoplasma</taxon>
    </lineage>
</organism>
<accession>Q602E6</accession>
<evidence type="ECO:0000255" key="1">
    <source>
        <dbReference type="HAMAP-Rule" id="MF_00658"/>
    </source>
</evidence>
<feature type="chain" id="PRO_0000198144" description="Ribosomal RNA large subunit methyltransferase H">
    <location>
        <begin position="1"/>
        <end position="152"/>
    </location>
</feature>
<feature type="binding site" evidence="1">
    <location>
        <position position="69"/>
    </location>
    <ligand>
        <name>S-adenosyl-L-methionine</name>
        <dbReference type="ChEBI" id="CHEBI:59789"/>
    </ligand>
</feature>
<feature type="binding site" evidence="1">
    <location>
        <position position="96"/>
    </location>
    <ligand>
        <name>S-adenosyl-L-methionine</name>
        <dbReference type="ChEBI" id="CHEBI:59789"/>
    </ligand>
</feature>
<feature type="binding site" evidence="1">
    <location>
        <begin position="118"/>
        <end position="123"/>
    </location>
    <ligand>
        <name>S-adenosyl-L-methionine</name>
        <dbReference type="ChEBI" id="CHEBI:59789"/>
    </ligand>
</feature>
<reference key="1">
    <citation type="journal article" date="2004" name="J. Bacteriol.">
        <title>The genome sequence of Mycoplasma hyopneumoniae strain 232, the agent of swine mycoplasmosis.</title>
        <authorList>
            <person name="Minion F.C."/>
            <person name="Lefkowitz E.J."/>
            <person name="Madsen M.L."/>
            <person name="Cleary B.J."/>
            <person name="Swartzell S.M."/>
            <person name="Mahairas G.G."/>
        </authorList>
    </citation>
    <scope>NUCLEOTIDE SEQUENCE [LARGE SCALE GENOMIC DNA]</scope>
    <source>
        <strain>232</strain>
    </source>
</reference>
<protein>
    <recommendedName>
        <fullName evidence="1">Ribosomal RNA large subunit methyltransferase H</fullName>
        <ecNumber evidence="1">2.1.1.177</ecNumber>
    </recommendedName>
    <alternativeName>
        <fullName evidence="1">23S rRNA (pseudouridine1915-N3)-methyltransferase</fullName>
    </alternativeName>
    <alternativeName>
        <fullName evidence="1">23S rRNA m3Psi1915 methyltransferase</fullName>
    </alternativeName>
    <alternativeName>
        <fullName evidence="1">rRNA (pseudouridine-N3-)-methyltransferase RlmH</fullName>
    </alternativeName>
</protein>
<sequence length="152" mass="17768">MKISIISFGSSPREWLGLYKKEINKIKQFKYQIEFINLSEHSQENIELKKMLETKDILQKIPKNSSCYLFTERGKTVTSKEFSQLLNFSNICFIIGGSYGVDEKLIAKSRPDIGFLSFGKLTFAHKIFKLIVLEQIYRGFSIKFNRKYHHAD</sequence>
<comment type="function">
    <text evidence="1">Specifically methylates the pseudouridine at position 1915 (m3Psi1915) in 23S rRNA.</text>
</comment>
<comment type="catalytic activity">
    <reaction evidence="1">
        <text>pseudouridine(1915) in 23S rRNA + S-adenosyl-L-methionine = N(3)-methylpseudouridine(1915) in 23S rRNA + S-adenosyl-L-homocysteine + H(+)</text>
        <dbReference type="Rhea" id="RHEA:42752"/>
        <dbReference type="Rhea" id="RHEA-COMP:10221"/>
        <dbReference type="Rhea" id="RHEA-COMP:10222"/>
        <dbReference type="ChEBI" id="CHEBI:15378"/>
        <dbReference type="ChEBI" id="CHEBI:57856"/>
        <dbReference type="ChEBI" id="CHEBI:59789"/>
        <dbReference type="ChEBI" id="CHEBI:65314"/>
        <dbReference type="ChEBI" id="CHEBI:74486"/>
        <dbReference type="EC" id="2.1.1.177"/>
    </reaction>
</comment>
<comment type="subunit">
    <text evidence="1">Homodimer.</text>
</comment>
<comment type="subcellular location">
    <subcellularLocation>
        <location evidence="1">Cytoplasm</location>
    </subcellularLocation>
</comment>
<comment type="similarity">
    <text evidence="1">Belongs to the RNA methyltransferase RlmH family.</text>
</comment>
<gene>
    <name evidence="1" type="primary">rlmH</name>
    <name type="ordered locus">mhp004</name>
</gene>
<proteinExistence type="inferred from homology"/>